<feature type="chain" id="PRO_0000317846" description="Probable cysteine protease ATG4">
    <location>
        <begin position="1"/>
        <end position="411"/>
    </location>
</feature>
<feature type="region of interest" description="Disordered" evidence="3">
    <location>
        <begin position="390"/>
        <end position="411"/>
    </location>
</feature>
<feature type="active site" description="Nucleophile" evidence="2">
    <location>
        <position position="135"/>
    </location>
</feature>
<feature type="active site" evidence="2">
    <location>
        <position position="310"/>
    </location>
</feature>
<feature type="active site" evidence="2">
    <location>
        <position position="312"/>
    </location>
</feature>
<accession>A7TQN1</accession>
<comment type="function">
    <text evidence="1">Cysteine protease that plays a key role in cytoplasm to vacuole transport (Cvt) and autophagy by mediating both proteolytic activation and delipidation of ATG8. Required for selective autophagic degradation of the nucleus (nucleophagy) as well as for mitophagy which contributes to regulate mitochondrial quantity and quality by eliminating the mitochondria to a basal level to fulfill cellular energy requirements and preventing excess ROS production. The protease activity is required for proteolytic activation of ATG8: cleaves the C-terminal amino acid of ATG8 to reveal a C-terminal glycine. ATG8 ubiquitin-like activity requires the exposure of the glycine at the C-terminus for its conjugation to phosphatidylethanolamine (PE) and its insertion to membranes, which is necessary for autophagy. The ATG8-PE conjugate mediates tethering between adjacent membranes and stimulates membrane hemifusion, leading to expansion of the autophagosomal membrane during autophagy. In addition to the protease activity, also catalyzes deconjugation of PE-conjugated forms of ATG8 during macroautophagy: ATG8 delipidation is required to release the protein from membranes, which facilitates multiple events during macroautophagy, and especially for efficient autophagosome biogenesis, the assembly of ATG9-containing tubulovesicular clusters into phagophores/autophagosomes, and for the disassembly of PAS-associated ATG components. ATG8 delipidation by ATG4 also recycles ATG8-PE generated on inappropriate membranes to maintain a reservoir of unlipidated ATG8 that is required for autophagosome formation at the PAS.</text>
</comment>
<comment type="catalytic activity">
    <reaction evidence="1">
        <text>[protein]-C-terminal L-amino acid-glycyl-phosphatidylethanolamide + H2O = [protein]-C-terminal L-amino acid-glycine + a 1,2-diacyl-sn-glycero-3-phosphoethanolamine</text>
        <dbReference type="Rhea" id="RHEA:67548"/>
        <dbReference type="Rhea" id="RHEA-COMP:17323"/>
        <dbReference type="Rhea" id="RHEA-COMP:17324"/>
        <dbReference type="ChEBI" id="CHEBI:15377"/>
        <dbReference type="ChEBI" id="CHEBI:64612"/>
        <dbReference type="ChEBI" id="CHEBI:172940"/>
        <dbReference type="ChEBI" id="CHEBI:172941"/>
    </reaction>
    <physiologicalReaction direction="left-to-right" evidence="1">
        <dbReference type="Rhea" id="RHEA:67549"/>
    </physiologicalReaction>
</comment>
<comment type="subcellular location">
    <subcellularLocation>
        <location evidence="1">Cytoplasm</location>
    </subcellularLocation>
    <subcellularLocation>
        <location evidence="1">Nucleus</location>
    </subcellularLocation>
    <subcellularLocation>
        <location evidence="1">Preautophagosomal structure</location>
    </subcellularLocation>
</comment>
<comment type="similarity">
    <text evidence="4">Belongs to the peptidase C54 family.</text>
</comment>
<protein>
    <recommendedName>
        <fullName>Probable cysteine protease ATG4</fullName>
        <ecNumber>3.4.22.-</ecNumber>
    </recommendedName>
    <alternativeName>
        <fullName>Autophagy-related protein 4</fullName>
    </alternativeName>
</protein>
<sequence>MELSQKEIGLDRSKDDNGLSSNDYVVLGIHYPIDSDDDKVVELANKRSNSAGGSIGMFQQFFNKVEEFDYHPGFLSDVISRIHFTYRTKFIPIARSDDGPSPLRINFLIGDNPFNAIENAIYNPNCFNTDIGWGCMIRTGQSLLANAIQIAILGREFRVNDGDVNEQERKIISWFMDTPDEPFSLHNFVKKGCELSSKKPGEWFGPAATSRSIQSLVEQFPDCGIDRCIVSVSSADIFKDEINDIFKNKRYSNILLLMGVKLGVDKVNEYYLKDIRKILESRYSVGISGGRPSSSLYFFGYQDDTLLYFDPHKPQPSTIESLLETCHTDNFDKINISDMDPSMLIGVLLQGEDDWQSWSNEVFDSKIINILNSRNDVTIAEDSMSLEETLEPPDNEYVDLGPMSQQLNGSP</sequence>
<proteinExistence type="inferred from homology"/>
<name>ATG4_VANPO</name>
<gene>
    <name type="primary">ATG4</name>
    <name type="ORF">Kpol_1015p1</name>
</gene>
<dbReference type="EC" id="3.4.22.-"/>
<dbReference type="EMBL" id="DS480461">
    <property type="protein sequence ID" value="EDO15412.1"/>
    <property type="molecule type" value="Genomic_DNA"/>
</dbReference>
<dbReference type="RefSeq" id="XP_001643270.1">
    <property type="nucleotide sequence ID" value="XM_001643220.1"/>
</dbReference>
<dbReference type="SMR" id="A7TQN1"/>
<dbReference type="FunCoup" id="A7TQN1">
    <property type="interactions" value="335"/>
</dbReference>
<dbReference type="STRING" id="436907.A7TQN1"/>
<dbReference type="MEROPS" id="C54.001"/>
<dbReference type="GeneID" id="5543503"/>
<dbReference type="KEGG" id="vpo:Kpol_1015p1"/>
<dbReference type="eggNOG" id="KOG2674">
    <property type="taxonomic scope" value="Eukaryota"/>
</dbReference>
<dbReference type="HOGENOM" id="CLU_021259_5_3_1"/>
<dbReference type="InParanoid" id="A7TQN1"/>
<dbReference type="OMA" id="PDETFHC"/>
<dbReference type="OrthoDB" id="2960936at2759"/>
<dbReference type="PhylomeDB" id="A7TQN1"/>
<dbReference type="Proteomes" id="UP000000267">
    <property type="component" value="Unassembled WGS sequence"/>
</dbReference>
<dbReference type="GO" id="GO:0005829">
    <property type="term" value="C:cytosol"/>
    <property type="evidence" value="ECO:0007669"/>
    <property type="project" value="EnsemblFungi"/>
</dbReference>
<dbReference type="GO" id="GO:0005739">
    <property type="term" value="C:mitochondrion"/>
    <property type="evidence" value="ECO:0007669"/>
    <property type="project" value="EnsemblFungi"/>
</dbReference>
<dbReference type="GO" id="GO:0005634">
    <property type="term" value="C:nucleus"/>
    <property type="evidence" value="ECO:0007669"/>
    <property type="project" value="UniProtKB-SubCell"/>
</dbReference>
<dbReference type="GO" id="GO:0000407">
    <property type="term" value="C:phagophore assembly site"/>
    <property type="evidence" value="ECO:0007669"/>
    <property type="project" value="UniProtKB-SubCell"/>
</dbReference>
<dbReference type="GO" id="GO:0004197">
    <property type="term" value="F:cysteine-type endopeptidase activity"/>
    <property type="evidence" value="ECO:0007669"/>
    <property type="project" value="TreeGrafter"/>
</dbReference>
<dbReference type="GO" id="GO:0019786">
    <property type="term" value="F:protein-phosphatidylethanolamide deconjugating activity"/>
    <property type="evidence" value="ECO:0007669"/>
    <property type="project" value="EnsemblFungi"/>
</dbReference>
<dbReference type="GO" id="GO:0035973">
    <property type="term" value="P:aggrephagy"/>
    <property type="evidence" value="ECO:0007669"/>
    <property type="project" value="TreeGrafter"/>
</dbReference>
<dbReference type="GO" id="GO:0000045">
    <property type="term" value="P:autophagosome assembly"/>
    <property type="evidence" value="ECO:0007669"/>
    <property type="project" value="EnsemblFungi"/>
</dbReference>
<dbReference type="GO" id="GO:0032258">
    <property type="term" value="P:cytoplasm to vacuole targeting by the Cvt pathway"/>
    <property type="evidence" value="ECO:0007669"/>
    <property type="project" value="EnsemblFungi"/>
</dbReference>
<dbReference type="GO" id="GO:0000423">
    <property type="term" value="P:mitophagy"/>
    <property type="evidence" value="ECO:0007669"/>
    <property type="project" value="TreeGrafter"/>
</dbReference>
<dbReference type="GO" id="GO:0034727">
    <property type="term" value="P:piecemeal microautophagy of the nucleus"/>
    <property type="evidence" value="ECO:0007669"/>
    <property type="project" value="EnsemblFungi"/>
</dbReference>
<dbReference type="GO" id="GO:0016485">
    <property type="term" value="P:protein processing"/>
    <property type="evidence" value="ECO:0007669"/>
    <property type="project" value="TreeGrafter"/>
</dbReference>
<dbReference type="GO" id="GO:0006612">
    <property type="term" value="P:protein targeting to membrane"/>
    <property type="evidence" value="ECO:0007669"/>
    <property type="project" value="EnsemblFungi"/>
</dbReference>
<dbReference type="InterPro" id="IPR038765">
    <property type="entry name" value="Papain-like_cys_pep_sf"/>
</dbReference>
<dbReference type="InterPro" id="IPR005078">
    <property type="entry name" value="Peptidase_C54"/>
</dbReference>
<dbReference type="InterPro" id="IPR046792">
    <property type="entry name" value="Peptidase_C54_cat"/>
</dbReference>
<dbReference type="PANTHER" id="PTHR22624:SF49">
    <property type="entry name" value="CYSTEINE PROTEASE"/>
    <property type="match status" value="1"/>
</dbReference>
<dbReference type="PANTHER" id="PTHR22624">
    <property type="entry name" value="CYSTEINE PROTEASE ATG4"/>
    <property type="match status" value="1"/>
</dbReference>
<dbReference type="Pfam" id="PF03416">
    <property type="entry name" value="Peptidase_C54"/>
    <property type="match status" value="1"/>
</dbReference>
<dbReference type="SUPFAM" id="SSF54001">
    <property type="entry name" value="Cysteine proteinases"/>
    <property type="match status" value="1"/>
</dbReference>
<evidence type="ECO:0000250" key="1">
    <source>
        <dbReference type="UniProtKB" id="P53867"/>
    </source>
</evidence>
<evidence type="ECO:0000250" key="2">
    <source>
        <dbReference type="UniProtKB" id="Q9Y4P1"/>
    </source>
</evidence>
<evidence type="ECO:0000256" key="3">
    <source>
        <dbReference type="SAM" id="MobiDB-lite"/>
    </source>
</evidence>
<evidence type="ECO:0000305" key="4"/>
<keyword id="KW-0072">Autophagy</keyword>
<keyword id="KW-0963">Cytoplasm</keyword>
<keyword id="KW-0378">Hydrolase</keyword>
<keyword id="KW-0539">Nucleus</keyword>
<keyword id="KW-0645">Protease</keyword>
<keyword id="KW-0653">Protein transport</keyword>
<keyword id="KW-1185">Reference proteome</keyword>
<keyword id="KW-0788">Thiol protease</keyword>
<keyword id="KW-0813">Transport</keyword>
<reference key="1">
    <citation type="journal article" date="2007" name="Proc. Natl. Acad. Sci. U.S.A.">
        <title>Independent sorting-out of thousands of duplicated gene pairs in two yeast species descended from a whole-genome duplication.</title>
        <authorList>
            <person name="Scannell D.R."/>
            <person name="Frank A.C."/>
            <person name="Conant G.C."/>
            <person name="Byrne K.P."/>
            <person name="Woolfit M."/>
            <person name="Wolfe K.H."/>
        </authorList>
    </citation>
    <scope>NUCLEOTIDE SEQUENCE [LARGE SCALE GENOMIC DNA]</scope>
    <source>
        <strain>ATCC 22028 / DSM 70294 / BCRC 21397 / CBS 2163 / NBRC 10782 / NRRL Y-8283 / UCD 57-17</strain>
    </source>
</reference>
<organism>
    <name type="scientific">Vanderwaltozyma polyspora (strain ATCC 22028 / DSM 70294 / BCRC 21397 / CBS 2163 / NBRC 10782 / NRRL Y-8283 / UCD 57-17)</name>
    <name type="common">Kluyveromyces polysporus</name>
    <dbReference type="NCBI Taxonomy" id="436907"/>
    <lineage>
        <taxon>Eukaryota</taxon>
        <taxon>Fungi</taxon>
        <taxon>Dikarya</taxon>
        <taxon>Ascomycota</taxon>
        <taxon>Saccharomycotina</taxon>
        <taxon>Saccharomycetes</taxon>
        <taxon>Saccharomycetales</taxon>
        <taxon>Saccharomycetaceae</taxon>
        <taxon>Vanderwaltozyma</taxon>
    </lineage>
</organism>